<proteinExistence type="inferred from homology"/>
<evidence type="ECO:0000255" key="1">
    <source>
        <dbReference type="HAMAP-Rule" id="MF_00170"/>
    </source>
</evidence>
<reference key="1">
    <citation type="submission" date="2007-05" db="EMBL/GenBank/DDBJ databases">
        <title>Complete sequence of Pseudomonas putida F1.</title>
        <authorList>
            <consortium name="US DOE Joint Genome Institute"/>
            <person name="Copeland A."/>
            <person name="Lucas S."/>
            <person name="Lapidus A."/>
            <person name="Barry K."/>
            <person name="Detter J.C."/>
            <person name="Glavina del Rio T."/>
            <person name="Hammon N."/>
            <person name="Israni S."/>
            <person name="Dalin E."/>
            <person name="Tice H."/>
            <person name="Pitluck S."/>
            <person name="Chain P."/>
            <person name="Malfatti S."/>
            <person name="Shin M."/>
            <person name="Vergez L."/>
            <person name="Schmutz J."/>
            <person name="Larimer F."/>
            <person name="Land M."/>
            <person name="Hauser L."/>
            <person name="Kyrpides N."/>
            <person name="Lykidis A."/>
            <person name="Parales R."/>
            <person name="Richardson P."/>
        </authorList>
    </citation>
    <scope>NUCLEOTIDE SEQUENCE [LARGE SCALE GENOMIC DNA]</scope>
    <source>
        <strain>ATCC 700007 / DSM 6899 / JCM 31910 / BCRC 17059 / LMG 24140 / F1</strain>
    </source>
</reference>
<organism>
    <name type="scientific">Pseudomonas putida (strain ATCC 700007 / DSM 6899 / JCM 31910 / BCRC 17059 / LMG 24140 / F1)</name>
    <dbReference type="NCBI Taxonomy" id="351746"/>
    <lineage>
        <taxon>Bacteria</taxon>
        <taxon>Pseudomonadati</taxon>
        <taxon>Pseudomonadota</taxon>
        <taxon>Gammaproteobacteria</taxon>
        <taxon>Pseudomonadales</taxon>
        <taxon>Pseudomonadaceae</taxon>
        <taxon>Pseudomonas</taxon>
    </lineage>
</organism>
<dbReference type="EC" id="5.3.1.6" evidence="1"/>
<dbReference type="EMBL" id="CP000712">
    <property type="protein sequence ID" value="ABQ81175.1"/>
    <property type="molecule type" value="Genomic_DNA"/>
</dbReference>
<dbReference type="SMR" id="A5WAL5"/>
<dbReference type="KEGG" id="ppf:Pput_5057"/>
<dbReference type="eggNOG" id="COG0120">
    <property type="taxonomic scope" value="Bacteria"/>
</dbReference>
<dbReference type="HOGENOM" id="CLU_056590_1_1_6"/>
<dbReference type="UniPathway" id="UPA00115">
    <property type="reaction ID" value="UER00412"/>
</dbReference>
<dbReference type="GO" id="GO:0005829">
    <property type="term" value="C:cytosol"/>
    <property type="evidence" value="ECO:0007669"/>
    <property type="project" value="TreeGrafter"/>
</dbReference>
<dbReference type="GO" id="GO:0004751">
    <property type="term" value="F:ribose-5-phosphate isomerase activity"/>
    <property type="evidence" value="ECO:0007669"/>
    <property type="project" value="UniProtKB-UniRule"/>
</dbReference>
<dbReference type="GO" id="GO:0006014">
    <property type="term" value="P:D-ribose metabolic process"/>
    <property type="evidence" value="ECO:0007669"/>
    <property type="project" value="TreeGrafter"/>
</dbReference>
<dbReference type="GO" id="GO:0009052">
    <property type="term" value="P:pentose-phosphate shunt, non-oxidative branch"/>
    <property type="evidence" value="ECO:0007669"/>
    <property type="project" value="UniProtKB-UniRule"/>
</dbReference>
<dbReference type="CDD" id="cd01398">
    <property type="entry name" value="RPI_A"/>
    <property type="match status" value="1"/>
</dbReference>
<dbReference type="FunFam" id="3.30.70.260:FF:000004">
    <property type="entry name" value="Ribose-5-phosphate isomerase A"/>
    <property type="match status" value="1"/>
</dbReference>
<dbReference type="FunFam" id="3.40.50.1360:FF:000001">
    <property type="entry name" value="Ribose-5-phosphate isomerase A"/>
    <property type="match status" value="1"/>
</dbReference>
<dbReference type="Gene3D" id="3.30.70.260">
    <property type="match status" value="1"/>
</dbReference>
<dbReference type="Gene3D" id="3.40.50.1360">
    <property type="match status" value="1"/>
</dbReference>
<dbReference type="HAMAP" id="MF_00170">
    <property type="entry name" value="Rib_5P_isom_A"/>
    <property type="match status" value="1"/>
</dbReference>
<dbReference type="InterPro" id="IPR037171">
    <property type="entry name" value="NagB/RpiA_transferase-like"/>
</dbReference>
<dbReference type="InterPro" id="IPR020672">
    <property type="entry name" value="Ribose5P_isomerase_typA_subgr"/>
</dbReference>
<dbReference type="InterPro" id="IPR004788">
    <property type="entry name" value="Ribose5P_isomerase_type_A"/>
</dbReference>
<dbReference type="NCBIfam" id="NF001924">
    <property type="entry name" value="PRK00702.1"/>
    <property type="match status" value="1"/>
</dbReference>
<dbReference type="NCBIfam" id="TIGR00021">
    <property type="entry name" value="rpiA"/>
    <property type="match status" value="1"/>
</dbReference>
<dbReference type="PANTHER" id="PTHR11934">
    <property type="entry name" value="RIBOSE-5-PHOSPHATE ISOMERASE"/>
    <property type="match status" value="1"/>
</dbReference>
<dbReference type="PANTHER" id="PTHR11934:SF0">
    <property type="entry name" value="RIBOSE-5-PHOSPHATE ISOMERASE"/>
    <property type="match status" value="1"/>
</dbReference>
<dbReference type="Pfam" id="PF06026">
    <property type="entry name" value="Rib_5-P_isom_A"/>
    <property type="match status" value="1"/>
</dbReference>
<dbReference type="SUPFAM" id="SSF75445">
    <property type="entry name" value="D-ribose-5-phosphate isomerase (RpiA), lid domain"/>
    <property type="match status" value="1"/>
</dbReference>
<dbReference type="SUPFAM" id="SSF100950">
    <property type="entry name" value="NagB/RpiA/CoA transferase-like"/>
    <property type="match status" value="1"/>
</dbReference>
<name>RPIA_PSEP1</name>
<gene>
    <name evidence="1" type="primary">rpiA</name>
    <name type="ordered locus">Pput_5057</name>
</gene>
<feature type="chain" id="PRO_1000016966" description="Ribose-5-phosphate isomerase A">
    <location>
        <begin position="1"/>
        <end position="224"/>
    </location>
</feature>
<feature type="active site" description="Proton acceptor" evidence="1">
    <location>
        <position position="107"/>
    </location>
</feature>
<feature type="binding site" evidence="1">
    <location>
        <begin position="32"/>
        <end position="35"/>
    </location>
    <ligand>
        <name>substrate</name>
    </ligand>
</feature>
<feature type="binding site" evidence="1">
    <location>
        <begin position="85"/>
        <end position="88"/>
    </location>
    <ligand>
        <name>substrate</name>
    </ligand>
</feature>
<feature type="binding site" evidence="1">
    <location>
        <begin position="98"/>
        <end position="101"/>
    </location>
    <ligand>
        <name>substrate</name>
    </ligand>
</feature>
<feature type="binding site" evidence="1">
    <location>
        <position position="125"/>
    </location>
    <ligand>
        <name>substrate</name>
    </ligand>
</feature>
<keyword id="KW-0413">Isomerase</keyword>
<comment type="function">
    <text evidence="1">Catalyzes the reversible conversion of ribose-5-phosphate to ribulose 5-phosphate.</text>
</comment>
<comment type="catalytic activity">
    <reaction evidence="1">
        <text>aldehydo-D-ribose 5-phosphate = D-ribulose 5-phosphate</text>
        <dbReference type="Rhea" id="RHEA:14657"/>
        <dbReference type="ChEBI" id="CHEBI:58121"/>
        <dbReference type="ChEBI" id="CHEBI:58273"/>
        <dbReference type="EC" id="5.3.1.6"/>
    </reaction>
</comment>
<comment type="pathway">
    <text evidence="1">Carbohydrate degradation; pentose phosphate pathway; D-ribose 5-phosphate from D-ribulose 5-phosphate (non-oxidative stage): step 1/1.</text>
</comment>
<comment type="subunit">
    <text evidence="1">Homodimer.</text>
</comment>
<comment type="similarity">
    <text evidence="1">Belongs to the ribose 5-phosphate isomerase family.</text>
</comment>
<accession>A5WAL5</accession>
<sequence>MTQDQLKQAVAQAAVDFILPKLDEKSVVGVGTGSTANFFIDALAQHKTAFDGAVASSEATAQRLKGHGIPVYELNSVSELEFYVDGADESDAHLHLIKGGGAALTREKIVAAVAKTFICIADGSKLVPVLGAFPLPVEVIPMARSHVARQLVKLGGDPVYREGVVTDNGNVILDVYNLQITNPVELEAQINAIVGVVTNGLFAARPADLLLLGTAEGVKSLKAE</sequence>
<protein>
    <recommendedName>
        <fullName evidence="1">Ribose-5-phosphate isomerase A</fullName>
        <ecNumber evidence="1">5.3.1.6</ecNumber>
    </recommendedName>
    <alternativeName>
        <fullName evidence="1">Phosphoriboisomerase A</fullName>
        <shortName evidence="1">PRI</shortName>
    </alternativeName>
</protein>